<proteinExistence type="inferred from homology"/>
<keyword id="KW-0150">Chloroplast</keyword>
<keyword id="KW-0472">Membrane</keyword>
<keyword id="KW-0602">Photosynthesis</keyword>
<keyword id="KW-0603">Photosystem I</keyword>
<keyword id="KW-0934">Plastid</keyword>
<keyword id="KW-0793">Thylakoid</keyword>
<keyword id="KW-0812">Transmembrane</keyword>
<keyword id="KW-1133">Transmembrane helix</keyword>
<evidence type="ECO:0000255" key="1">
    <source>
        <dbReference type="HAMAP-Rule" id="MF_00522"/>
    </source>
</evidence>
<name>PSAJ_NEPOL</name>
<sequence>MKDFTTYLSTAPVLAAVWFGFLAGLLIEINRFFPDALSFSFV</sequence>
<organism>
    <name type="scientific">Nephroselmis olivacea</name>
    <name type="common">Green alga</name>
    <dbReference type="NCBI Taxonomy" id="31312"/>
    <lineage>
        <taxon>Eukaryota</taxon>
        <taxon>Viridiplantae</taxon>
        <taxon>Chlorophyta</taxon>
        <taxon>Nephroselmidophyceae</taxon>
        <taxon>Nephroselmidales</taxon>
        <taxon>Nephroselmidaceae</taxon>
        <taxon>Nephroselmis</taxon>
    </lineage>
</organism>
<accession>Q9TKZ8</accession>
<protein>
    <recommendedName>
        <fullName evidence="1">Photosystem I reaction center subunit IX</fullName>
    </recommendedName>
    <alternativeName>
        <fullName evidence="1">PSI-J</fullName>
    </alternativeName>
</protein>
<dbReference type="EMBL" id="AF137379">
    <property type="protein sequence ID" value="AAD54818.1"/>
    <property type="molecule type" value="Genomic_DNA"/>
</dbReference>
<dbReference type="RefSeq" id="NP_050847.1">
    <property type="nucleotide sequence ID" value="NC_000927.1"/>
</dbReference>
<dbReference type="SMR" id="Q9TKZ8"/>
<dbReference type="GeneID" id="802021"/>
<dbReference type="GO" id="GO:0009535">
    <property type="term" value="C:chloroplast thylakoid membrane"/>
    <property type="evidence" value="ECO:0007669"/>
    <property type="project" value="UniProtKB-SubCell"/>
</dbReference>
<dbReference type="GO" id="GO:0009522">
    <property type="term" value="C:photosystem I"/>
    <property type="evidence" value="ECO:0007669"/>
    <property type="project" value="UniProtKB-KW"/>
</dbReference>
<dbReference type="GO" id="GO:0015979">
    <property type="term" value="P:photosynthesis"/>
    <property type="evidence" value="ECO:0007669"/>
    <property type="project" value="UniProtKB-UniRule"/>
</dbReference>
<dbReference type="Gene3D" id="1.20.5.510">
    <property type="entry name" value="Single helix bin"/>
    <property type="match status" value="1"/>
</dbReference>
<dbReference type="HAMAP" id="MF_00522">
    <property type="entry name" value="PSI_PsaJ"/>
    <property type="match status" value="1"/>
</dbReference>
<dbReference type="InterPro" id="IPR002615">
    <property type="entry name" value="PSI_PsaJ"/>
</dbReference>
<dbReference type="InterPro" id="IPR036062">
    <property type="entry name" value="PSI_PsaJ_sf"/>
</dbReference>
<dbReference type="PANTHER" id="PTHR36082">
    <property type="match status" value="1"/>
</dbReference>
<dbReference type="PANTHER" id="PTHR36082:SF2">
    <property type="entry name" value="PHOTOSYSTEM I REACTION CENTER SUBUNIT IX"/>
    <property type="match status" value="1"/>
</dbReference>
<dbReference type="Pfam" id="PF01701">
    <property type="entry name" value="PSI_PsaJ"/>
    <property type="match status" value="1"/>
</dbReference>
<dbReference type="SUPFAM" id="SSF81544">
    <property type="entry name" value="Subunit IX of photosystem I reaction centre, PsaJ"/>
    <property type="match status" value="1"/>
</dbReference>
<reference key="1">
    <citation type="journal article" date="1999" name="Proc. Natl. Acad. Sci. U.S.A.">
        <title>The complete chloroplast DNA sequence of the green alga Nephroselmis olivacea: insights into the architecture of ancestral chloroplast genomes.</title>
        <authorList>
            <person name="Turmel M."/>
            <person name="Otis C."/>
            <person name="Lemieux C."/>
        </authorList>
    </citation>
    <scope>NUCLEOTIDE SEQUENCE [LARGE SCALE GENOMIC DNA]</scope>
    <source>
        <strain>NIES-484 / S-N-5-8</strain>
    </source>
</reference>
<comment type="function">
    <text evidence="1">May help in the organization of the PsaE and PsaF subunits.</text>
</comment>
<comment type="subcellular location">
    <subcellularLocation>
        <location evidence="1">Plastid</location>
        <location evidence="1">Chloroplast thylakoid membrane</location>
        <topology evidence="1">Single-pass membrane protein</topology>
    </subcellularLocation>
</comment>
<comment type="similarity">
    <text evidence="1">Belongs to the PsaJ family.</text>
</comment>
<geneLocation type="chloroplast"/>
<feature type="chain" id="PRO_0000207798" description="Photosystem I reaction center subunit IX">
    <location>
        <begin position="1"/>
        <end position="42"/>
    </location>
</feature>
<feature type="transmembrane region" description="Helical" evidence="1">
    <location>
        <begin position="7"/>
        <end position="27"/>
    </location>
</feature>
<gene>
    <name evidence="1" type="primary">psaJ</name>
</gene>